<organism>
    <name type="scientific">Rhodobacter capsulatus</name>
    <name type="common">Rhodopseudomonas capsulata</name>
    <dbReference type="NCBI Taxonomy" id="1061"/>
    <lineage>
        <taxon>Bacteria</taxon>
        <taxon>Pseudomonadati</taxon>
        <taxon>Pseudomonadota</taxon>
        <taxon>Alphaproteobacteria</taxon>
        <taxon>Rhodobacterales</taxon>
        <taxon>Rhodobacter group</taxon>
        <taxon>Rhodobacter</taxon>
    </lineage>
</organism>
<comment type="function">
    <text evidence="1">Involved in the maturation of [NiFe] hydrogenases. Involved in the biosynthesis of the Fe(CN)(2)CO cofactor.</text>
</comment>
<comment type="pathway">
    <text evidence="1">Protein modification; [NiFe] hydrogenase maturation.</text>
</comment>
<comment type="similarity">
    <text evidence="2">Belongs to the HupF/HypC family.</text>
</comment>
<proteinExistence type="inferred from homology"/>
<protein>
    <recommendedName>
        <fullName evidence="1">Hydrogenase maturation factor HypC</fullName>
    </recommendedName>
</protein>
<accession>P40428</accession>
<sequence>MCLGIPGQIVAITDAGRMMALADVSGVKRAVNVACVAEGPLEDLLGHWALIHVGFAMSLIDEAEAARTLEALRDLGEAQETLAQMAEGAAALEGRG</sequence>
<name>HYPC_RHOCA</name>
<gene>
    <name type="primary">hypC</name>
</gene>
<reference key="1">
    <citation type="journal article" date="1993" name="Mol. Microbiol.">
        <title>Organization of the genes necessary for hydrogenase expression in Rhodobacter capsulatus. Sequence analysis and identification of two hyp regulatory mutants.</title>
        <authorList>
            <person name="Colbeau A."/>
            <person name="Richaud P."/>
            <person name="Toussaint B."/>
            <person name="Caballero F.J."/>
            <person name="Elster C."/>
            <person name="Delphin C."/>
            <person name="Smith R.L."/>
            <person name="Chabert J."/>
            <person name="Vignais P.M."/>
        </authorList>
    </citation>
    <scope>NUCLEOTIDE SEQUENCE [GENOMIC DNA]</scope>
    <source>
        <strain>ATCC 33303 / B10</strain>
    </source>
</reference>
<evidence type="ECO:0000250" key="1">
    <source>
        <dbReference type="UniProtKB" id="P0AAM3"/>
    </source>
</evidence>
<evidence type="ECO:0000305" key="2"/>
<feature type="chain" id="PRO_0000201397" description="Hydrogenase maturation factor HypC">
    <location>
        <begin position="1"/>
        <end position="96"/>
    </location>
</feature>
<dbReference type="EMBL" id="X61007">
    <property type="status" value="NOT_ANNOTATED_CDS"/>
    <property type="molecule type" value="Genomic_DNA"/>
</dbReference>
<dbReference type="PIR" id="S32952">
    <property type="entry name" value="S32952"/>
</dbReference>
<dbReference type="RefSeq" id="WP_013066523.1">
    <property type="nucleotide sequence ID" value="NZ_VIBE01000017.1"/>
</dbReference>
<dbReference type="SMR" id="P40428"/>
<dbReference type="GeneID" id="31489721"/>
<dbReference type="OMA" id="QKMGADY"/>
<dbReference type="UniPathway" id="UPA00335"/>
<dbReference type="GO" id="GO:1902670">
    <property type="term" value="F:carbon dioxide binding"/>
    <property type="evidence" value="ECO:0007669"/>
    <property type="project" value="TreeGrafter"/>
</dbReference>
<dbReference type="GO" id="GO:0005506">
    <property type="term" value="F:iron ion binding"/>
    <property type="evidence" value="ECO:0007669"/>
    <property type="project" value="TreeGrafter"/>
</dbReference>
<dbReference type="GO" id="GO:0051604">
    <property type="term" value="P:protein maturation"/>
    <property type="evidence" value="ECO:0007669"/>
    <property type="project" value="TreeGrafter"/>
</dbReference>
<dbReference type="FunFam" id="2.30.30.140:FF:000022">
    <property type="entry name" value="Hydrogenase assembly chaperone HybG"/>
    <property type="match status" value="1"/>
</dbReference>
<dbReference type="Gene3D" id="2.30.30.140">
    <property type="match status" value="1"/>
</dbReference>
<dbReference type="InterPro" id="IPR019812">
    <property type="entry name" value="Hydgase_assmbl_chp_CS"/>
</dbReference>
<dbReference type="InterPro" id="IPR001109">
    <property type="entry name" value="Hydrogenase_HupF/HypC"/>
</dbReference>
<dbReference type="NCBIfam" id="TIGR00074">
    <property type="entry name" value="hypC_hupF"/>
    <property type="match status" value="1"/>
</dbReference>
<dbReference type="PANTHER" id="PTHR35177">
    <property type="entry name" value="HYDROGENASE MATURATION FACTOR HYBG"/>
    <property type="match status" value="1"/>
</dbReference>
<dbReference type="PANTHER" id="PTHR35177:SF2">
    <property type="entry name" value="HYDROGENASE MATURATION FACTOR HYBG"/>
    <property type="match status" value="1"/>
</dbReference>
<dbReference type="Pfam" id="PF01455">
    <property type="entry name" value="HupF_HypC"/>
    <property type="match status" value="1"/>
</dbReference>
<dbReference type="PRINTS" id="PR00445">
    <property type="entry name" value="HUPFHYPC"/>
</dbReference>
<dbReference type="SUPFAM" id="SSF159127">
    <property type="entry name" value="HupF/HypC-like"/>
    <property type="match status" value="1"/>
</dbReference>
<dbReference type="PROSITE" id="PS01097">
    <property type="entry name" value="HUPF_HYPC"/>
    <property type="match status" value="1"/>
</dbReference>